<organism>
    <name type="scientific">Rattus norvegicus</name>
    <name type="common">Rat</name>
    <dbReference type="NCBI Taxonomy" id="10116"/>
    <lineage>
        <taxon>Eukaryota</taxon>
        <taxon>Metazoa</taxon>
        <taxon>Chordata</taxon>
        <taxon>Craniata</taxon>
        <taxon>Vertebrata</taxon>
        <taxon>Euteleostomi</taxon>
        <taxon>Mammalia</taxon>
        <taxon>Eutheria</taxon>
        <taxon>Euarchontoglires</taxon>
        <taxon>Glires</taxon>
        <taxon>Rodentia</taxon>
        <taxon>Myomorpha</taxon>
        <taxon>Muroidea</taxon>
        <taxon>Muridae</taxon>
        <taxon>Murinae</taxon>
        <taxon>Rattus</taxon>
    </lineage>
</organism>
<protein>
    <recommendedName>
        <fullName>Rho-related GTP-binding protein RhoV</fullName>
    </recommendedName>
    <alternativeName>
        <fullName>Rho family GTPase Chp</fullName>
    </alternativeName>
</protein>
<gene>
    <name evidence="11" type="primary">Rhov</name>
</gene>
<dbReference type="EMBL" id="AF097887">
    <property type="protein sequence ID" value="AAC69198.1"/>
    <property type="molecule type" value="mRNA"/>
</dbReference>
<dbReference type="EMBL" id="BC086990">
    <property type="protein sequence ID" value="AAH86990.1"/>
    <property type="molecule type" value="mRNA"/>
</dbReference>
<dbReference type="RefSeq" id="NP_612551.2">
    <property type="nucleotide sequence ID" value="NM_138542.2"/>
</dbReference>
<dbReference type="SMR" id="Q9Z1Y0"/>
<dbReference type="FunCoup" id="Q9Z1Y0">
    <property type="interactions" value="444"/>
</dbReference>
<dbReference type="IntAct" id="Q9Z1Y0">
    <property type="interactions" value="2"/>
</dbReference>
<dbReference type="STRING" id="10116.ENSRNOP00000018277"/>
<dbReference type="PhosphoSitePlus" id="Q9Z1Y0"/>
<dbReference type="SwissPalm" id="Q9Z1Y0"/>
<dbReference type="PaxDb" id="10116-ENSRNOP00000018277"/>
<dbReference type="GeneID" id="171581"/>
<dbReference type="KEGG" id="rno:171581"/>
<dbReference type="UCSC" id="RGD:628824">
    <property type="organism name" value="rat"/>
</dbReference>
<dbReference type="AGR" id="RGD:628824"/>
<dbReference type="CTD" id="171177"/>
<dbReference type="RGD" id="628824">
    <property type="gene designation" value="Rhov"/>
</dbReference>
<dbReference type="eggNOG" id="KOG0393">
    <property type="taxonomic scope" value="Eukaryota"/>
</dbReference>
<dbReference type="InParanoid" id="Q9Z1Y0"/>
<dbReference type="OrthoDB" id="8830751at2759"/>
<dbReference type="PhylomeDB" id="Q9Z1Y0"/>
<dbReference type="TreeFam" id="TF321839"/>
<dbReference type="Reactome" id="R-RNO-9013424">
    <property type="pathway name" value="RHOV GTPase cycle"/>
</dbReference>
<dbReference type="PRO" id="PR:Q9Z1Y0"/>
<dbReference type="Proteomes" id="UP000002494">
    <property type="component" value="Unplaced"/>
</dbReference>
<dbReference type="GO" id="GO:0010008">
    <property type="term" value="C:endosome membrane"/>
    <property type="evidence" value="ECO:0007669"/>
    <property type="project" value="UniProtKB-SubCell"/>
</dbReference>
<dbReference type="GO" id="GO:0005886">
    <property type="term" value="C:plasma membrane"/>
    <property type="evidence" value="ECO:0000318"/>
    <property type="project" value="GO_Central"/>
</dbReference>
<dbReference type="GO" id="GO:0005525">
    <property type="term" value="F:GTP binding"/>
    <property type="evidence" value="ECO:0000318"/>
    <property type="project" value="GO_Central"/>
</dbReference>
<dbReference type="GO" id="GO:0003924">
    <property type="term" value="F:GTPase activity"/>
    <property type="evidence" value="ECO:0000318"/>
    <property type="project" value="GO_Central"/>
</dbReference>
<dbReference type="GO" id="GO:0046872">
    <property type="term" value="F:metal ion binding"/>
    <property type="evidence" value="ECO:0007669"/>
    <property type="project" value="UniProtKB-KW"/>
</dbReference>
<dbReference type="GO" id="GO:0019901">
    <property type="term" value="F:protein kinase binding"/>
    <property type="evidence" value="ECO:0000318"/>
    <property type="project" value="GO_Central"/>
</dbReference>
<dbReference type="GO" id="GO:0007015">
    <property type="term" value="P:actin filament organization"/>
    <property type="evidence" value="ECO:0000318"/>
    <property type="project" value="GO_Central"/>
</dbReference>
<dbReference type="GO" id="GO:0006897">
    <property type="term" value="P:endocytosis"/>
    <property type="evidence" value="ECO:0000318"/>
    <property type="project" value="GO_Central"/>
</dbReference>
<dbReference type="GO" id="GO:0030010">
    <property type="term" value="P:establishment of cell polarity"/>
    <property type="evidence" value="ECO:0000318"/>
    <property type="project" value="GO_Central"/>
</dbReference>
<dbReference type="GO" id="GO:0007165">
    <property type="term" value="P:signal transduction"/>
    <property type="evidence" value="ECO:0000318"/>
    <property type="project" value="GO_Central"/>
</dbReference>
<dbReference type="GO" id="GO:0007264">
    <property type="term" value="P:small GTPase-mediated signal transduction"/>
    <property type="evidence" value="ECO:0007669"/>
    <property type="project" value="InterPro"/>
</dbReference>
<dbReference type="CDD" id="cd04130">
    <property type="entry name" value="Wrch_1"/>
    <property type="match status" value="1"/>
</dbReference>
<dbReference type="FunFam" id="3.40.50.300:FF:000561">
    <property type="entry name" value="rho-related GTP-binding protein RhoV"/>
    <property type="match status" value="1"/>
</dbReference>
<dbReference type="Gene3D" id="3.40.50.300">
    <property type="entry name" value="P-loop containing nucleotide triphosphate hydrolases"/>
    <property type="match status" value="1"/>
</dbReference>
<dbReference type="InterPro" id="IPR027417">
    <property type="entry name" value="P-loop_NTPase"/>
</dbReference>
<dbReference type="InterPro" id="IPR005225">
    <property type="entry name" value="Small_GTP-bd"/>
</dbReference>
<dbReference type="InterPro" id="IPR001806">
    <property type="entry name" value="Small_GTPase"/>
</dbReference>
<dbReference type="InterPro" id="IPR003578">
    <property type="entry name" value="Small_GTPase_Rho"/>
</dbReference>
<dbReference type="NCBIfam" id="TIGR00231">
    <property type="entry name" value="small_GTP"/>
    <property type="match status" value="1"/>
</dbReference>
<dbReference type="PANTHER" id="PTHR24072">
    <property type="entry name" value="RHO FAMILY GTPASE"/>
    <property type="match status" value="1"/>
</dbReference>
<dbReference type="Pfam" id="PF00071">
    <property type="entry name" value="Ras"/>
    <property type="match status" value="1"/>
</dbReference>
<dbReference type="PRINTS" id="PR00449">
    <property type="entry name" value="RASTRNSFRMNG"/>
</dbReference>
<dbReference type="SMART" id="SM00175">
    <property type="entry name" value="RAB"/>
    <property type="match status" value="1"/>
</dbReference>
<dbReference type="SMART" id="SM00173">
    <property type="entry name" value="RAS"/>
    <property type="match status" value="1"/>
</dbReference>
<dbReference type="SMART" id="SM00174">
    <property type="entry name" value="RHO"/>
    <property type="match status" value="1"/>
</dbReference>
<dbReference type="SUPFAM" id="SSF52540">
    <property type="entry name" value="P-loop containing nucleoside triphosphate hydrolases"/>
    <property type="match status" value="1"/>
</dbReference>
<dbReference type="PROSITE" id="PS51420">
    <property type="entry name" value="RHO"/>
    <property type="match status" value="1"/>
</dbReference>
<reference evidence="8 9" key="1">
    <citation type="journal article" date="1998" name="Curr. Biol.">
        <title>Chp, a homologue of the GTPase Cdc42Hs, activates the JNK pathway and is implicated in reorganizing the actin cytoskeleton.</title>
        <authorList>
            <person name="Aronheim A."/>
            <person name="Broder Y.C."/>
            <person name="Cohen A."/>
            <person name="Fritsch A."/>
            <person name="Belisle B."/>
            <person name="Abo A."/>
        </authorList>
    </citation>
    <scope>NUCLEOTIDE SEQUENCE [MRNA]</scope>
    <scope>FUNCTION</scope>
    <scope>GTP-BINDING</scope>
    <scope>TISSUE SPECIFICITY</scope>
    <scope>INTERACTION WITH PAK2</scope>
    <source>
        <tissue evidence="9">Pituitary</tissue>
    </source>
</reference>
<reference evidence="10" key="2">
    <citation type="journal article" date="2004" name="Genome Res.">
        <title>The status, quality, and expansion of the NIH full-length cDNA project: the Mammalian Gene Collection (MGC).</title>
        <authorList>
            <consortium name="The MGC Project Team"/>
        </authorList>
    </citation>
    <scope>NUCLEOTIDE SEQUENCE [LARGE SCALE MRNA]</scope>
    <source>
        <strain evidence="10">Brown Norway</strain>
        <tissue evidence="10">Testis</tissue>
    </source>
</reference>
<reference evidence="8" key="3">
    <citation type="journal article" date="2005" name="J. Biol. Chem.">
        <title>Critical and distinct roles of amino- and carboxyl-terminal sequences in regulation of the biological activity of the Chp atypical Rho GTPase.</title>
        <authorList>
            <person name="Chenette E.J."/>
            <person name="Abo A."/>
            <person name="Der C.J."/>
        </authorList>
    </citation>
    <scope>SUBCELLULAR LOCATION</scope>
    <scope>MUTAGENESIS OF GLY-40; CYS-227 AND CYS-234</scope>
    <scope>PALMITOYLATION AT CYS-234</scope>
</reference>
<reference evidence="8" key="4">
    <citation type="journal article" date="2006" name="Mol. Biol. Cell">
        <title>Multiple sequence elements facilitate Chp Rho GTPase subcellular location, membrane association, and transforming activity.</title>
        <authorList>
            <person name="Chenette E.J."/>
            <person name="Mitin N.Y."/>
            <person name="Der C.J."/>
        </authorList>
    </citation>
    <scope>SUBCELLULAR LOCATION</scope>
    <scope>MUTAGENESIS OF ARG-226; ARG-228; TRP-229; LYS-230 AND LYS-231</scope>
</reference>
<keyword id="KW-1003">Cell membrane</keyword>
<keyword id="KW-0967">Endosome</keyword>
<keyword id="KW-0342">GTP-binding</keyword>
<keyword id="KW-0449">Lipoprotein</keyword>
<keyword id="KW-0460">Magnesium</keyword>
<keyword id="KW-0472">Membrane</keyword>
<keyword id="KW-0479">Metal-binding</keyword>
<keyword id="KW-0547">Nucleotide-binding</keyword>
<keyword id="KW-0564">Palmitate</keyword>
<keyword id="KW-0597">Phosphoprotein</keyword>
<keyword id="KW-1185">Reference proteome</keyword>
<proteinExistence type="evidence at protein level"/>
<name>RHOV_RAT</name>
<sequence>MPPRELSEAEPPPLPASTPPPRRRSAPPELGIKCVLVGDGAVGKSSLIVSYTCNGYPSRYRPTALDTFSVQVLVDGAPVRIELWDTAGQEDFDRLRSLCYPDTDVFLACFSVVQPSSFQNITEKWLPEIRTHNPQAPVLLVGTQADLRDDVNVLIQLDQGGREGPVPEPQAQGLAEKIRACCYLECSALTQKNLKEVFDSAILSAIEHKARLEKKLNAKGVRTLSRCRWKKFFCFV</sequence>
<comment type="function">
    <text evidence="7">Plays a role in the control of the actin cytoskeleton via activation of the JNK pathway.</text>
</comment>
<comment type="cofactor">
    <cofactor evidence="2">
        <name>Mg(2+)</name>
        <dbReference type="ChEBI" id="CHEBI:18420"/>
    </cofactor>
</comment>
<comment type="subunit">
    <text evidence="7">Interacts with PAK2.</text>
</comment>
<comment type="interaction">
    <interactant intactId="EBI-77480">
        <id>Q9Z1Y0</id>
    </interactant>
    <interactant intactId="EBI-77460">
        <id>Q91XS8</id>
        <label>Stk17b</label>
    </interactant>
    <organismsDiffer>false</organismsDiffer>
    <experiments>2</experiments>
</comment>
<comment type="subcellular location">
    <subcellularLocation>
        <location evidence="5 6">Cell membrane</location>
        <topology evidence="5 6">Lipid-anchor</topology>
        <orientation evidence="5 6">Cytoplasmic side</orientation>
    </subcellularLocation>
    <subcellularLocation>
        <location evidence="5 6">Endosome membrane</location>
        <topology evidence="5 6">Lipid-anchor</topology>
        <orientation evidence="5 6">Cytoplasmic side</orientation>
    </subcellularLocation>
    <text evidence="5 6">Treatment with TNF activates endosomal but not plasma membrane RHOV.</text>
</comment>
<comment type="tissue specificity">
    <text evidence="7">Highly expressed in brain and testis and at lower levels in spleen and lung.</text>
</comment>
<comment type="similarity">
    <text evidence="7">Belongs to the small GTPase superfamily. Rho family.</text>
</comment>
<evidence type="ECO:0000250" key="1">
    <source>
        <dbReference type="UniProtKB" id="P61586"/>
    </source>
</evidence>
<evidence type="ECO:0000250" key="2">
    <source>
        <dbReference type="UniProtKB" id="Q7L0Q8"/>
    </source>
</evidence>
<evidence type="ECO:0000250" key="3">
    <source>
        <dbReference type="UniProtKB" id="Q96L33"/>
    </source>
</evidence>
<evidence type="ECO:0000256" key="4">
    <source>
        <dbReference type="SAM" id="MobiDB-lite"/>
    </source>
</evidence>
<evidence type="ECO:0000269" key="5">
    <source>
    </source>
</evidence>
<evidence type="ECO:0000269" key="6">
    <source>
    </source>
</evidence>
<evidence type="ECO:0000269" key="7">
    <source>
    </source>
</evidence>
<evidence type="ECO:0000305" key="8"/>
<evidence type="ECO:0000312" key="9">
    <source>
        <dbReference type="EMBL" id="AAC69198.1"/>
    </source>
</evidence>
<evidence type="ECO:0000312" key="10">
    <source>
        <dbReference type="EMBL" id="AAH86990.1"/>
    </source>
</evidence>
<evidence type="ECO:0000312" key="11">
    <source>
        <dbReference type="RGD" id="628824"/>
    </source>
</evidence>
<accession>Q9Z1Y0</accession>
<feature type="chain" id="PRO_0000326440" description="Rho-related GTP-binding protein RhoV">
    <location>
        <begin position="1"/>
        <end position="236"/>
    </location>
</feature>
<feature type="region of interest" description="Disordered" evidence="4">
    <location>
        <begin position="1"/>
        <end position="28"/>
    </location>
</feature>
<feature type="compositionally biased region" description="Pro residues" evidence="4">
    <location>
        <begin position="10"/>
        <end position="20"/>
    </location>
</feature>
<feature type="binding site" evidence="5">
    <location>
        <begin position="38"/>
        <end position="45"/>
    </location>
    <ligand>
        <name>GTP</name>
        <dbReference type="ChEBI" id="CHEBI:37565"/>
    </ligand>
</feature>
<feature type="binding site" evidence="2">
    <location>
        <begin position="85"/>
        <end position="89"/>
    </location>
    <ligand>
        <name>GTP</name>
        <dbReference type="ChEBI" id="CHEBI:37565"/>
    </ligand>
</feature>
<feature type="binding site" evidence="1">
    <location>
        <begin position="143"/>
        <end position="146"/>
    </location>
    <ligand>
        <name>GTP</name>
        <dbReference type="ChEBI" id="CHEBI:37565"/>
    </ligand>
</feature>
<feature type="modified residue" description="Phosphoserine" evidence="3">
    <location>
        <position position="25"/>
    </location>
</feature>
<feature type="lipid moiety-binding region" description="S-palmitoyl cysteine" evidence="5">
    <location>
        <position position="234"/>
    </location>
</feature>
<feature type="mutagenesis site" description="Constitutively GTP-bound and constitutively active." evidence="5">
    <original>G</original>
    <variation>V</variation>
    <location>
        <position position="40"/>
    </location>
</feature>
<feature type="mutagenesis site" description="Increase in GDP/GTP cycling." evidence="5">
    <original>Y</original>
    <variation>L</variation>
    <location>
        <position position="56"/>
    </location>
</feature>
<feature type="mutagenesis site" description="Loss of subcellular location to plasma membrane, decreased association with endomembranes." evidence="6">
    <original>RCR</original>
    <variation>QCQ</variation>
    <location>
        <begin position="226"/>
        <end position="228"/>
    </location>
</feature>
<feature type="mutagenesis site" description="Loss of subcellular location to plasma membrane." evidence="6">
    <original>R</original>
    <variation>Q</variation>
    <location>
        <position position="226"/>
    </location>
</feature>
<feature type="mutagenesis site" description="No effect on subcellular location." evidence="5">
    <original>C</original>
    <variation>S</variation>
    <location>
        <position position="227"/>
    </location>
</feature>
<feature type="mutagenesis site" description="Loss of subcellular location to plasma membrane." evidence="6">
    <original>R</original>
    <variation>Q</variation>
    <location>
        <position position="228"/>
    </location>
</feature>
<feature type="mutagenesis site" description="Loss of subcellular location to plasma and endosomal membrane." evidence="6">
    <original>W</original>
    <variation>Y</variation>
    <location>
        <position position="229"/>
    </location>
</feature>
<feature type="mutagenesis site" description="Loss of subcellular location to plasma membrane, decreased association with endomembranes." evidence="6">
    <original>KK</original>
    <variation>QQ</variation>
    <location>
        <begin position="230"/>
        <end position="231"/>
    </location>
</feature>
<feature type="mutagenesis site" description="Loss of subcellular location to plasma membrane, decreased association with endomembranes." evidence="6">
    <original>K</original>
    <variation>Q</variation>
    <location>
        <position position="230"/>
    </location>
</feature>
<feature type="mutagenesis site" description="Loss of subcellular location to plasma membrane, decreased association with endomembranes." evidence="6">
    <original>K</original>
    <variation>Q</variation>
    <location>
        <position position="231"/>
    </location>
</feature>
<feature type="mutagenesis site" description="Loss of subcellular location to plasma and endosomal membranes." evidence="5">
    <original>C</original>
    <variation>S</variation>
    <location>
        <position position="234"/>
    </location>
</feature>